<accession>A5VKY3</accession>
<proteinExistence type="inferred from homology"/>
<keyword id="KW-0067">ATP-binding</keyword>
<keyword id="KW-0131">Cell cycle</keyword>
<keyword id="KW-0132">Cell division</keyword>
<keyword id="KW-0133">Cell shape</keyword>
<keyword id="KW-0961">Cell wall biogenesis/degradation</keyword>
<keyword id="KW-0963">Cytoplasm</keyword>
<keyword id="KW-0436">Ligase</keyword>
<keyword id="KW-0547">Nucleotide-binding</keyword>
<keyword id="KW-0573">Peptidoglycan synthesis</keyword>
<keyword id="KW-1185">Reference proteome</keyword>
<organism>
    <name type="scientific">Limosilactobacillus reuteri (strain DSM 20016)</name>
    <name type="common">Lactobacillus reuteri</name>
    <dbReference type="NCBI Taxonomy" id="557436"/>
    <lineage>
        <taxon>Bacteria</taxon>
        <taxon>Bacillati</taxon>
        <taxon>Bacillota</taxon>
        <taxon>Bacilli</taxon>
        <taxon>Lactobacillales</taxon>
        <taxon>Lactobacillaceae</taxon>
        <taxon>Limosilactobacillus</taxon>
    </lineage>
</organism>
<gene>
    <name evidence="1" type="primary">murC</name>
    <name type="ordered locus">Lreu_1250</name>
</gene>
<comment type="function">
    <text evidence="1">Cell wall formation.</text>
</comment>
<comment type="catalytic activity">
    <reaction evidence="1">
        <text>UDP-N-acetyl-alpha-D-muramate + L-alanine + ATP = UDP-N-acetyl-alpha-D-muramoyl-L-alanine + ADP + phosphate + H(+)</text>
        <dbReference type="Rhea" id="RHEA:23372"/>
        <dbReference type="ChEBI" id="CHEBI:15378"/>
        <dbReference type="ChEBI" id="CHEBI:30616"/>
        <dbReference type="ChEBI" id="CHEBI:43474"/>
        <dbReference type="ChEBI" id="CHEBI:57972"/>
        <dbReference type="ChEBI" id="CHEBI:70757"/>
        <dbReference type="ChEBI" id="CHEBI:83898"/>
        <dbReference type="ChEBI" id="CHEBI:456216"/>
        <dbReference type="EC" id="6.3.2.8"/>
    </reaction>
</comment>
<comment type="pathway">
    <text evidence="1">Cell wall biogenesis; peptidoglycan biosynthesis.</text>
</comment>
<comment type="subcellular location">
    <subcellularLocation>
        <location evidence="1">Cytoplasm</location>
    </subcellularLocation>
</comment>
<comment type="similarity">
    <text evidence="1">Belongs to the MurCDEF family.</text>
</comment>
<protein>
    <recommendedName>
        <fullName evidence="1">UDP-N-acetylmuramate--L-alanine ligase</fullName>
        <ecNumber evidence="1">6.3.2.8</ecNumber>
    </recommendedName>
    <alternativeName>
        <fullName evidence="1">UDP-N-acetylmuramoyl-L-alanine synthetase</fullName>
    </alternativeName>
</protein>
<evidence type="ECO:0000255" key="1">
    <source>
        <dbReference type="HAMAP-Rule" id="MF_00046"/>
    </source>
</evidence>
<dbReference type="EC" id="6.3.2.8" evidence="1"/>
<dbReference type="EMBL" id="CP000705">
    <property type="protein sequence ID" value="ABQ83507.1"/>
    <property type="molecule type" value="Genomic_DNA"/>
</dbReference>
<dbReference type="RefSeq" id="WP_003668496.1">
    <property type="nucleotide sequence ID" value="NC_009513.1"/>
</dbReference>
<dbReference type="SMR" id="A5VKY3"/>
<dbReference type="STRING" id="557436.Lreu_1250"/>
<dbReference type="KEGG" id="lre:Lreu_1250"/>
<dbReference type="eggNOG" id="COG0773">
    <property type="taxonomic scope" value="Bacteria"/>
</dbReference>
<dbReference type="HOGENOM" id="CLU_028104_1_0_9"/>
<dbReference type="UniPathway" id="UPA00219"/>
<dbReference type="Proteomes" id="UP000001991">
    <property type="component" value="Chromosome"/>
</dbReference>
<dbReference type="GO" id="GO:0005737">
    <property type="term" value="C:cytoplasm"/>
    <property type="evidence" value="ECO:0007669"/>
    <property type="project" value="UniProtKB-SubCell"/>
</dbReference>
<dbReference type="GO" id="GO:0005524">
    <property type="term" value="F:ATP binding"/>
    <property type="evidence" value="ECO:0007669"/>
    <property type="project" value="UniProtKB-UniRule"/>
</dbReference>
<dbReference type="GO" id="GO:0008763">
    <property type="term" value="F:UDP-N-acetylmuramate-L-alanine ligase activity"/>
    <property type="evidence" value="ECO:0007669"/>
    <property type="project" value="UniProtKB-UniRule"/>
</dbReference>
<dbReference type="GO" id="GO:0051301">
    <property type="term" value="P:cell division"/>
    <property type="evidence" value="ECO:0007669"/>
    <property type="project" value="UniProtKB-KW"/>
</dbReference>
<dbReference type="GO" id="GO:0071555">
    <property type="term" value="P:cell wall organization"/>
    <property type="evidence" value="ECO:0007669"/>
    <property type="project" value="UniProtKB-KW"/>
</dbReference>
<dbReference type="GO" id="GO:0009252">
    <property type="term" value="P:peptidoglycan biosynthetic process"/>
    <property type="evidence" value="ECO:0007669"/>
    <property type="project" value="UniProtKB-UniRule"/>
</dbReference>
<dbReference type="GO" id="GO:0008360">
    <property type="term" value="P:regulation of cell shape"/>
    <property type="evidence" value="ECO:0007669"/>
    <property type="project" value="UniProtKB-KW"/>
</dbReference>
<dbReference type="Gene3D" id="3.90.190.20">
    <property type="entry name" value="Mur ligase, C-terminal domain"/>
    <property type="match status" value="1"/>
</dbReference>
<dbReference type="Gene3D" id="3.40.1190.10">
    <property type="entry name" value="Mur-like, catalytic domain"/>
    <property type="match status" value="1"/>
</dbReference>
<dbReference type="Gene3D" id="3.40.50.720">
    <property type="entry name" value="NAD(P)-binding Rossmann-like Domain"/>
    <property type="match status" value="1"/>
</dbReference>
<dbReference type="HAMAP" id="MF_00046">
    <property type="entry name" value="MurC"/>
    <property type="match status" value="1"/>
</dbReference>
<dbReference type="InterPro" id="IPR036565">
    <property type="entry name" value="Mur-like_cat_sf"/>
</dbReference>
<dbReference type="InterPro" id="IPR004101">
    <property type="entry name" value="Mur_ligase_C"/>
</dbReference>
<dbReference type="InterPro" id="IPR036615">
    <property type="entry name" value="Mur_ligase_C_dom_sf"/>
</dbReference>
<dbReference type="InterPro" id="IPR013221">
    <property type="entry name" value="Mur_ligase_cen"/>
</dbReference>
<dbReference type="InterPro" id="IPR000713">
    <property type="entry name" value="Mur_ligase_N"/>
</dbReference>
<dbReference type="InterPro" id="IPR050061">
    <property type="entry name" value="MurCDEF_pg_biosynth"/>
</dbReference>
<dbReference type="InterPro" id="IPR005758">
    <property type="entry name" value="UDP-N-AcMur_Ala_ligase_MurC"/>
</dbReference>
<dbReference type="NCBIfam" id="TIGR01082">
    <property type="entry name" value="murC"/>
    <property type="match status" value="1"/>
</dbReference>
<dbReference type="PANTHER" id="PTHR43445:SF3">
    <property type="entry name" value="UDP-N-ACETYLMURAMATE--L-ALANINE LIGASE"/>
    <property type="match status" value="1"/>
</dbReference>
<dbReference type="PANTHER" id="PTHR43445">
    <property type="entry name" value="UDP-N-ACETYLMURAMATE--L-ALANINE LIGASE-RELATED"/>
    <property type="match status" value="1"/>
</dbReference>
<dbReference type="Pfam" id="PF01225">
    <property type="entry name" value="Mur_ligase"/>
    <property type="match status" value="1"/>
</dbReference>
<dbReference type="Pfam" id="PF02875">
    <property type="entry name" value="Mur_ligase_C"/>
    <property type="match status" value="1"/>
</dbReference>
<dbReference type="Pfam" id="PF08245">
    <property type="entry name" value="Mur_ligase_M"/>
    <property type="match status" value="1"/>
</dbReference>
<dbReference type="SUPFAM" id="SSF51984">
    <property type="entry name" value="MurCD N-terminal domain"/>
    <property type="match status" value="1"/>
</dbReference>
<dbReference type="SUPFAM" id="SSF53623">
    <property type="entry name" value="MurD-like peptide ligases, catalytic domain"/>
    <property type="match status" value="1"/>
</dbReference>
<dbReference type="SUPFAM" id="SSF53244">
    <property type="entry name" value="MurD-like peptide ligases, peptide-binding domain"/>
    <property type="match status" value="1"/>
</dbReference>
<sequence length="434" mass="48581">MEQNTYYFVGIKGTGMASLARILHDKGHQVLGSDIEKETFTQAPLLAAGIKILPFDPANLKPGMIVIQGNAFDDDHPEIKRAHELGLKILSYPEAVENEVKNHTSIGIAGAHGKTSTTALLSHVLAAVEPTSYLIGDGVGKGNADARFFVFEADEYRDHFLAYHPDYAIMTNVDFDHPDYFNDLADVRDSFETYGKQVQRAIFAWGDDPSLRDLNVDVPVYYYGTNPDDDFRAENIQRTPEGSTYDAYFRDQKLGTFTIHLYGEHSVLNSLAVLAVAYMEHMNMDEIQQELANFSGVKRRFSETDIADTTIIDDYAHHPSEIKATIDAARQKYPDREVIAVFQPHTYSRLAAYIDGFAESLSRADKTFVTPIFGSIRENAGNVSSADLEQRIDGSEGIDMDTMDKLLQYHNAVVVFMGAGDVEKYEEKYKELLK</sequence>
<reference key="1">
    <citation type="journal article" date="2011" name="PLoS Genet.">
        <title>The evolution of host specialization in the vertebrate gut symbiont Lactobacillus reuteri.</title>
        <authorList>
            <person name="Frese S.A."/>
            <person name="Benson A.K."/>
            <person name="Tannock G.W."/>
            <person name="Loach D.M."/>
            <person name="Kim J."/>
            <person name="Zhang M."/>
            <person name="Oh P.L."/>
            <person name="Heng N.C."/>
            <person name="Patil P.B."/>
            <person name="Juge N."/>
            <person name="Mackenzie D.A."/>
            <person name="Pearson B.M."/>
            <person name="Lapidus A."/>
            <person name="Dalin E."/>
            <person name="Tice H."/>
            <person name="Goltsman E."/>
            <person name="Land M."/>
            <person name="Hauser L."/>
            <person name="Ivanova N."/>
            <person name="Kyrpides N.C."/>
            <person name="Walter J."/>
        </authorList>
    </citation>
    <scope>NUCLEOTIDE SEQUENCE [LARGE SCALE GENOMIC DNA]</scope>
    <source>
        <strain>DSM 20016</strain>
    </source>
</reference>
<feature type="chain" id="PRO_0000336839" description="UDP-N-acetylmuramate--L-alanine ligase">
    <location>
        <begin position="1"/>
        <end position="434"/>
    </location>
</feature>
<feature type="binding site" evidence="1">
    <location>
        <begin position="110"/>
        <end position="116"/>
    </location>
    <ligand>
        <name>ATP</name>
        <dbReference type="ChEBI" id="CHEBI:30616"/>
    </ligand>
</feature>
<name>MURC_LIMRD</name>